<accession>Q8U4L3</accession>
<keyword id="KW-0067">ATP-binding</keyword>
<keyword id="KW-1003">Cell membrane</keyword>
<keyword id="KW-0472">Membrane</keyword>
<keyword id="KW-0547">Nucleotide-binding</keyword>
<keyword id="KW-1185">Reference proteome</keyword>
<keyword id="KW-1278">Translocase</keyword>
<keyword id="KW-0813">Transport</keyword>
<dbReference type="EC" id="7.-.-.-"/>
<dbReference type="EMBL" id="AE009950">
    <property type="protein sequence ID" value="AAL80192.1"/>
    <property type="molecule type" value="Genomic_DNA"/>
</dbReference>
<dbReference type="RefSeq" id="WP_011011180.1">
    <property type="nucleotide sequence ID" value="NZ_CP023154.1"/>
</dbReference>
<dbReference type="SMR" id="Q8U4L3"/>
<dbReference type="STRING" id="186497.PF0068"/>
<dbReference type="PaxDb" id="186497-PF0068"/>
<dbReference type="KEGG" id="pfu:PF0068"/>
<dbReference type="PATRIC" id="fig|186497.12.peg.72"/>
<dbReference type="eggNOG" id="arCOG00202">
    <property type="taxonomic scope" value="Archaea"/>
</dbReference>
<dbReference type="HOGENOM" id="CLU_000604_1_22_2"/>
<dbReference type="OrthoDB" id="35850at2157"/>
<dbReference type="PhylomeDB" id="Q8U4L3"/>
<dbReference type="Proteomes" id="UP000001013">
    <property type="component" value="Chromosome"/>
</dbReference>
<dbReference type="GO" id="GO:0043190">
    <property type="term" value="C:ATP-binding cassette (ABC) transporter complex"/>
    <property type="evidence" value="ECO:0007669"/>
    <property type="project" value="TreeGrafter"/>
</dbReference>
<dbReference type="GO" id="GO:0005524">
    <property type="term" value="F:ATP binding"/>
    <property type="evidence" value="ECO:0007669"/>
    <property type="project" value="UniProtKB-KW"/>
</dbReference>
<dbReference type="GO" id="GO:0016887">
    <property type="term" value="F:ATP hydrolysis activity"/>
    <property type="evidence" value="ECO:0007669"/>
    <property type="project" value="InterPro"/>
</dbReference>
<dbReference type="GO" id="GO:0042626">
    <property type="term" value="F:ATPase-coupled transmembrane transporter activity"/>
    <property type="evidence" value="ECO:0007669"/>
    <property type="project" value="TreeGrafter"/>
</dbReference>
<dbReference type="CDD" id="cd03225">
    <property type="entry name" value="ABC_cobalt_CbiO_domain1"/>
    <property type="match status" value="1"/>
</dbReference>
<dbReference type="FunFam" id="3.40.50.300:FF:000224">
    <property type="entry name" value="Energy-coupling factor transporter ATP-binding protein EcfA"/>
    <property type="match status" value="1"/>
</dbReference>
<dbReference type="Gene3D" id="3.40.50.300">
    <property type="entry name" value="P-loop containing nucleotide triphosphate hydrolases"/>
    <property type="match status" value="1"/>
</dbReference>
<dbReference type="InterPro" id="IPR003593">
    <property type="entry name" value="AAA+_ATPase"/>
</dbReference>
<dbReference type="InterPro" id="IPR003439">
    <property type="entry name" value="ABC_transporter-like_ATP-bd"/>
</dbReference>
<dbReference type="InterPro" id="IPR017871">
    <property type="entry name" value="ABC_transporter-like_CS"/>
</dbReference>
<dbReference type="InterPro" id="IPR015856">
    <property type="entry name" value="ABC_transpr_CbiO/EcfA_su"/>
</dbReference>
<dbReference type="InterPro" id="IPR050095">
    <property type="entry name" value="ECF_ABC_transporter_ATP-bd"/>
</dbReference>
<dbReference type="InterPro" id="IPR027417">
    <property type="entry name" value="P-loop_NTPase"/>
</dbReference>
<dbReference type="PANTHER" id="PTHR43553:SF25">
    <property type="entry name" value="ABC-TYPE COBALT TRANSPORT SYSTEM, ATPASE COMPONENT"/>
    <property type="match status" value="1"/>
</dbReference>
<dbReference type="PANTHER" id="PTHR43553">
    <property type="entry name" value="HEAVY METAL TRANSPORTER"/>
    <property type="match status" value="1"/>
</dbReference>
<dbReference type="Pfam" id="PF00005">
    <property type="entry name" value="ABC_tran"/>
    <property type="match status" value="1"/>
</dbReference>
<dbReference type="SMART" id="SM00382">
    <property type="entry name" value="AAA"/>
    <property type="match status" value="1"/>
</dbReference>
<dbReference type="SUPFAM" id="SSF52540">
    <property type="entry name" value="P-loop containing nucleoside triphosphate hydrolases"/>
    <property type="match status" value="1"/>
</dbReference>
<dbReference type="PROSITE" id="PS00211">
    <property type="entry name" value="ABC_TRANSPORTER_1"/>
    <property type="match status" value="1"/>
</dbReference>
<dbReference type="PROSITE" id="PS50893">
    <property type="entry name" value="ABC_TRANSPORTER_2"/>
    <property type="match status" value="1"/>
</dbReference>
<reference key="1">
    <citation type="journal article" date="1999" name="Genetics">
        <title>Divergence of the hyperthermophilic archaea Pyrococcus furiosus and P. horikoshii inferred from complete genomic sequences.</title>
        <authorList>
            <person name="Maeder D.L."/>
            <person name="Weiss R.B."/>
            <person name="Dunn D.M."/>
            <person name="Cherry J.L."/>
            <person name="Gonzalez J.M."/>
            <person name="DiRuggiero J."/>
            <person name="Robb F.T."/>
        </authorList>
    </citation>
    <scope>NUCLEOTIDE SEQUENCE [LARGE SCALE GENOMIC DNA]</scope>
    <source>
        <strain>ATCC 43587 / DSM 3638 / JCM 8422 / Vc1</strain>
    </source>
</reference>
<comment type="function">
    <text evidence="1">Probably part of an ABC transporter complex. Responsible for energy coupling to the transport system (By similarity).</text>
</comment>
<comment type="subcellular location">
    <subcellularLocation>
        <location evidence="1">Cell membrane</location>
        <topology evidence="1">Peripheral membrane protein</topology>
    </subcellularLocation>
</comment>
<comment type="similarity">
    <text evidence="3">Belongs to the ABC transporter superfamily.</text>
</comment>
<organism>
    <name type="scientific">Pyrococcus furiosus (strain ATCC 43587 / DSM 3638 / JCM 8422 / Vc1)</name>
    <dbReference type="NCBI Taxonomy" id="186497"/>
    <lineage>
        <taxon>Archaea</taxon>
        <taxon>Methanobacteriati</taxon>
        <taxon>Methanobacteriota</taxon>
        <taxon>Thermococci</taxon>
        <taxon>Thermococcales</taxon>
        <taxon>Thermococcaceae</taxon>
        <taxon>Pyrococcus</taxon>
    </lineage>
</organism>
<evidence type="ECO:0000250" key="1"/>
<evidence type="ECO:0000255" key="2">
    <source>
        <dbReference type="PROSITE-ProRule" id="PRU00434"/>
    </source>
</evidence>
<evidence type="ECO:0000305" key="3"/>
<name>Y068_PYRFU</name>
<protein>
    <recommendedName>
        <fullName>Putative ABC transporter ATP-binding protein PF0068</fullName>
        <ecNumber>7.-.-.-</ecNumber>
    </recommendedName>
</protein>
<gene>
    <name type="ordered locus">PF0068</name>
</gene>
<proteinExistence type="inferred from homology"/>
<sequence>MIEVKGVWFWYEEGKPVLKNISLSFDEGILAVVGPNGSGKTTLVKMFNGLIKPKKGDVLVDGINTKEASTAQLSRIVGYVFQNPDAMFFEETVFDEVAFGPRNLGLSEEEVKERVKWALEAVGLKGFEDKNPFKLSGGEKQRLAIACILAMNPKYLVLDEPTTGLDERGVGALKNIIEELRKEGKSFVIVTHDMDLVLEVADKVLLLSNGEVQFYGDVFEFFELDLKRYKLEEPELVKICRGIGLKPVRSVEELLRGIGL</sequence>
<feature type="chain" id="PRO_0000092157" description="Putative ABC transporter ATP-binding protein PF0068">
    <location>
        <begin position="1"/>
        <end position="260"/>
    </location>
</feature>
<feature type="domain" description="ABC transporter" evidence="2">
    <location>
        <begin position="2"/>
        <end position="234"/>
    </location>
</feature>
<feature type="binding site" evidence="2">
    <location>
        <begin position="34"/>
        <end position="41"/>
    </location>
    <ligand>
        <name>ATP</name>
        <dbReference type="ChEBI" id="CHEBI:30616"/>
    </ligand>
</feature>